<gene>
    <name evidence="1" type="primary">serS</name>
    <name type="ordered locus">Pisl_0528</name>
</gene>
<protein>
    <recommendedName>
        <fullName evidence="1">Serine--tRNA ligase</fullName>
        <ecNumber evidence="1">6.1.1.11</ecNumber>
    </recommendedName>
    <alternativeName>
        <fullName evidence="1">Seryl-tRNA synthetase</fullName>
        <shortName evidence="1">SerRS</shortName>
    </alternativeName>
    <alternativeName>
        <fullName evidence="1">Seryl-tRNA(Ser/Sec) synthetase</fullName>
    </alternativeName>
</protein>
<evidence type="ECO:0000255" key="1">
    <source>
        <dbReference type="HAMAP-Rule" id="MF_00176"/>
    </source>
</evidence>
<accession>A1RRX4</accession>
<proteinExistence type="inferred from homology"/>
<reference key="1">
    <citation type="submission" date="2006-12" db="EMBL/GenBank/DDBJ databases">
        <title>Complete sequence of Pyrobaculum islandicum DSM 4184.</title>
        <authorList>
            <person name="Copeland A."/>
            <person name="Lucas S."/>
            <person name="Lapidus A."/>
            <person name="Barry K."/>
            <person name="Detter J.C."/>
            <person name="Glavina del Rio T."/>
            <person name="Dalin E."/>
            <person name="Tice H."/>
            <person name="Pitluck S."/>
            <person name="Meincke L."/>
            <person name="Brettin T."/>
            <person name="Bruce D."/>
            <person name="Han C."/>
            <person name="Tapia R."/>
            <person name="Gilna P."/>
            <person name="Schmutz J."/>
            <person name="Larimer F."/>
            <person name="Land M."/>
            <person name="Hauser L."/>
            <person name="Kyrpides N."/>
            <person name="Mikhailova N."/>
            <person name="Cozen A.E."/>
            <person name="Fitz-Gibbon S.T."/>
            <person name="House C.H."/>
            <person name="Saltikov C."/>
            <person name="Lowe T."/>
            <person name="Richardson P."/>
        </authorList>
    </citation>
    <scope>NUCLEOTIDE SEQUENCE [LARGE SCALE GENOMIC DNA]</scope>
    <source>
        <strain>DSM 4184 / JCM 9189 / GEO3</strain>
    </source>
</reference>
<feature type="chain" id="PRO_1000019786" description="Serine--tRNA ligase">
    <location>
        <begin position="1"/>
        <end position="448"/>
    </location>
</feature>
<feature type="binding site" evidence="1">
    <location>
        <begin position="246"/>
        <end position="248"/>
    </location>
    <ligand>
        <name>L-serine</name>
        <dbReference type="ChEBI" id="CHEBI:33384"/>
    </ligand>
</feature>
<feature type="binding site" evidence="1">
    <location>
        <begin position="277"/>
        <end position="279"/>
    </location>
    <ligand>
        <name>ATP</name>
        <dbReference type="ChEBI" id="CHEBI:30616"/>
    </ligand>
</feature>
<feature type="binding site" evidence="1">
    <location>
        <position position="293"/>
    </location>
    <ligand>
        <name>ATP</name>
        <dbReference type="ChEBI" id="CHEBI:30616"/>
    </ligand>
</feature>
<feature type="binding site" evidence="1">
    <location>
        <position position="300"/>
    </location>
    <ligand>
        <name>L-serine</name>
        <dbReference type="ChEBI" id="CHEBI:33384"/>
    </ligand>
</feature>
<feature type="binding site" evidence="1">
    <location>
        <begin position="364"/>
        <end position="367"/>
    </location>
    <ligand>
        <name>ATP</name>
        <dbReference type="ChEBI" id="CHEBI:30616"/>
    </ligand>
</feature>
<feature type="binding site" evidence="1">
    <location>
        <position position="399"/>
    </location>
    <ligand>
        <name>L-serine</name>
        <dbReference type="ChEBI" id="CHEBI:33384"/>
    </ligand>
</feature>
<dbReference type="EC" id="6.1.1.11" evidence="1"/>
<dbReference type="EMBL" id="CP000504">
    <property type="protein sequence ID" value="ABL87706.1"/>
    <property type="molecule type" value="Genomic_DNA"/>
</dbReference>
<dbReference type="RefSeq" id="WP_011762283.1">
    <property type="nucleotide sequence ID" value="NC_008701.1"/>
</dbReference>
<dbReference type="SMR" id="A1RRX4"/>
<dbReference type="STRING" id="384616.Pisl_0528"/>
<dbReference type="GeneID" id="4617963"/>
<dbReference type="KEGG" id="pis:Pisl_0528"/>
<dbReference type="eggNOG" id="arCOG00403">
    <property type="taxonomic scope" value="Archaea"/>
</dbReference>
<dbReference type="HOGENOM" id="CLU_023797_0_1_2"/>
<dbReference type="OrthoDB" id="35932at2157"/>
<dbReference type="UniPathway" id="UPA00906">
    <property type="reaction ID" value="UER00895"/>
</dbReference>
<dbReference type="Proteomes" id="UP000002595">
    <property type="component" value="Chromosome"/>
</dbReference>
<dbReference type="GO" id="GO:0005737">
    <property type="term" value="C:cytoplasm"/>
    <property type="evidence" value="ECO:0007669"/>
    <property type="project" value="UniProtKB-SubCell"/>
</dbReference>
<dbReference type="GO" id="GO:0005524">
    <property type="term" value="F:ATP binding"/>
    <property type="evidence" value="ECO:0007669"/>
    <property type="project" value="UniProtKB-UniRule"/>
</dbReference>
<dbReference type="GO" id="GO:0004828">
    <property type="term" value="F:serine-tRNA ligase activity"/>
    <property type="evidence" value="ECO:0007669"/>
    <property type="project" value="UniProtKB-UniRule"/>
</dbReference>
<dbReference type="GO" id="GO:0016260">
    <property type="term" value="P:selenocysteine biosynthetic process"/>
    <property type="evidence" value="ECO:0007669"/>
    <property type="project" value="UniProtKB-UniRule"/>
</dbReference>
<dbReference type="GO" id="GO:0006434">
    <property type="term" value="P:seryl-tRNA aminoacylation"/>
    <property type="evidence" value="ECO:0007669"/>
    <property type="project" value="UniProtKB-UniRule"/>
</dbReference>
<dbReference type="CDD" id="cd00770">
    <property type="entry name" value="SerRS_core"/>
    <property type="match status" value="1"/>
</dbReference>
<dbReference type="Gene3D" id="3.30.930.10">
    <property type="entry name" value="Bira Bifunctional Protein, Domain 2"/>
    <property type="match status" value="1"/>
</dbReference>
<dbReference type="Gene3D" id="1.10.287.40">
    <property type="entry name" value="Serine-tRNA synthetase, tRNA binding domain"/>
    <property type="match status" value="1"/>
</dbReference>
<dbReference type="HAMAP" id="MF_00176">
    <property type="entry name" value="Ser_tRNA_synth_type1"/>
    <property type="match status" value="1"/>
</dbReference>
<dbReference type="InterPro" id="IPR002314">
    <property type="entry name" value="aa-tRNA-synt_IIb"/>
</dbReference>
<dbReference type="InterPro" id="IPR006195">
    <property type="entry name" value="aa-tRNA-synth_II"/>
</dbReference>
<dbReference type="InterPro" id="IPR045864">
    <property type="entry name" value="aa-tRNA-synth_II/BPL/LPL"/>
</dbReference>
<dbReference type="InterPro" id="IPR002317">
    <property type="entry name" value="Ser-tRNA-ligase_type_1"/>
</dbReference>
<dbReference type="InterPro" id="IPR015866">
    <property type="entry name" value="Ser-tRNA-synth_1_N"/>
</dbReference>
<dbReference type="InterPro" id="IPR042103">
    <property type="entry name" value="SerRS_1_N_sf"/>
</dbReference>
<dbReference type="InterPro" id="IPR033729">
    <property type="entry name" value="SerRS_core"/>
</dbReference>
<dbReference type="InterPro" id="IPR010978">
    <property type="entry name" value="tRNA-bd_arm"/>
</dbReference>
<dbReference type="NCBIfam" id="TIGR00414">
    <property type="entry name" value="serS"/>
    <property type="match status" value="1"/>
</dbReference>
<dbReference type="PANTHER" id="PTHR11778">
    <property type="entry name" value="SERYL-TRNA SYNTHETASE"/>
    <property type="match status" value="1"/>
</dbReference>
<dbReference type="Pfam" id="PF02403">
    <property type="entry name" value="Seryl_tRNA_N"/>
    <property type="match status" value="1"/>
</dbReference>
<dbReference type="Pfam" id="PF00587">
    <property type="entry name" value="tRNA-synt_2b"/>
    <property type="match status" value="1"/>
</dbReference>
<dbReference type="PIRSF" id="PIRSF001529">
    <property type="entry name" value="Ser-tRNA-synth_IIa"/>
    <property type="match status" value="1"/>
</dbReference>
<dbReference type="PRINTS" id="PR00981">
    <property type="entry name" value="TRNASYNTHSER"/>
</dbReference>
<dbReference type="SUPFAM" id="SSF55681">
    <property type="entry name" value="Class II aaRS and biotin synthetases"/>
    <property type="match status" value="1"/>
</dbReference>
<dbReference type="SUPFAM" id="SSF46589">
    <property type="entry name" value="tRNA-binding arm"/>
    <property type="match status" value="1"/>
</dbReference>
<dbReference type="PROSITE" id="PS50862">
    <property type="entry name" value="AA_TRNA_LIGASE_II"/>
    <property type="match status" value="1"/>
</dbReference>
<name>SYS_PYRIL</name>
<sequence length="448" mass="51774">MSYSVLEALRNNPDYVKKVLTARRLDTSLVDKFLELDKKWRQLKKEVDELRHVYNQLSKEGAKAPPERRREIVEKARELAAKLENLEKEVEKIEREREDLLWSFPNLIHDSVPICPEGVDSIPVRYGGVVKVAKDAVGTLKDVEYVIVDKLPIGHADMAEVVLGMVDTLKAGEVAGSRFYYLLDDLVWLDFALAMYAMDRLAQKGFRPIIPPYMLKFDVIKRVLDFDTFRDAIYKIEGEDLYLIATAEHGIAAYLYKRELVEDELPLLFVGWSPCFRKEAGAGSRDLKGIFRVHIFHKVEQFVFSLPEDSWRWHEEITKNTEELIKDLGLPYRVVNICAHDLGAPAAKKYDIEVWYPAQSMYRELASCSNVTDWQSYRLGIRVTRKGMRREFVHTLNCTGLATTRTITAILENFQREDGVVEIPKVLRPYLEPIKAAPKDYIYPKKRS</sequence>
<comment type="function">
    <text evidence="1">Catalyzes the attachment of serine to tRNA(Ser). Is also able to aminoacylate tRNA(Sec) with serine, to form the misacylated tRNA L-seryl-tRNA(Sec), which will be further converted into selenocysteinyl-tRNA(Sec).</text>
</comment>
<comment type="catalytic activity">
    <reaction evidence="1">
        <text>tRNA(Ser) + L-serine + ATP = L-seryl-tRNA(Ser) + AMP + diphosphate + H(+)</text>
        <dbReference type="Rhea" id="RHEA:12292"/>
        <dbReference type="Rhea" id="RHEA-COMP:9669"/>
        <dbReference type="Rhea" id="RHEA-COMP:9703"/>
        <dbReference type="ChEBI" id="CHEBI:15378"/>
        <dbReference type="ChEBI" id="CHEBI:30616"/>
        <dbReference type="ChEBI" id="CHEBI:33019"/>
        <dbReference type="ChEBI" id="CHEBI:33384"/>
        <dbReference type="ChEBI" id="CHEBI:78442"/>
        <dbReference type="ChEBI" id="CHEBI:78533"/>
        <dbReference type="ChEBI" id="CHEBI:456215"/>
        <dbReference type="EC" id="6.1.1.11"/>
    </reaction>
</comment>
<comment type="catalytic activity">
    <reaction evidence="1">
        <text>tRNA(Sec) + L-serine + ATP = L-seryl-tRNA(Sec) + AMP + diphosphate + H(+)</text>
        <dbReference type="Rhea" id="RHEA:42580"/>
        <dbReference type="Rhea" id="RHEA-COMP:9742"/>
        <dbReference type="Rhea" id="RHEA-COMP:10128"/>
        <dbReference type="ChEBI" id="CHEBI:15378"/>
        <dbReference type="ChEBI" id="CHEBI:30616"/>
        <dbReference type="ChEBI" id="CHEBI:33019"/>
        <dbReference type="ChEBI" id="CHEBI:33384"/>
        <dbReference type="ChEBI" id="CHEBI:78442"/>
        <dbReference type="ChEBI" id="CHEBI:78533"/>
        <dbReference type="ChEBI" id="CHEBI:456215"/>
        <dbReference type="EC" id="6.1.1.11"/>
    </reaction>
</comment>
<comment type="pathway">
    <text evidence="1">Aminoacyl-tRNA biosynthesis; selenocysteinyl-tRNA(Sec) biosynthesis; L-seryl-tRNA(Sec) from L-serine and tRNA(Sec): step 1/1.</text>
</comment>
<comment type="subunit">
    <text evidence="1">Homodimer. The tRNA molecule binds across the dimer.</text>
</comment>
<comment type="subcellular location">
    <subcellularLocation>
        <location evidence="1">Cytoplasm</location>
    </subcellularLocation>
</comment>
<comment type="domain">
    <text evidence="1">Consists of two distinct domains, a catalytic core and a N-terminal extension that is involved in tRNA binding.</text>
</comment>
<comment type="similarity">
    <text evidence="1">Belongs to the class-II aminoacyl-tRNA synthetase family. Type-1 seryl-tRNA synthetase subfamily.</text>
</comment>
<organism>
    <name type="scientific">Pyrobaculum islandicum (strain DSM 4184 / JCM 9189 / GEO3)</name>
    <dbReference type="NCBI Taxonomy" id="384616"/>
    <lineage>
        <taxon>Archaea</taxon>
        <taxon>Thermoproteota</taxon>
        <taxon>Thermoprotei</taxon>
        <taxon>Thermoproteales</taxon>
        <taxon>Thermoproteaceae</taxon>
        <taxon>Pyrobaculum</taxon>
    </lineage>
</organism>
<keyword id="KW-0030">Aminoacyl-tRNA synthetase</keyword>
<keyword id="KW-0067">ATP-binding</keyword>
<keyword id="KW-0963">Cytoplasm</keyword>
<keyword id="KW-0436">Ligase</keyword>
<keyword id="KW-0547">Nucleotide-binding</keyword>
<keyword id="KW-0648">Protein biosynthesis</keyword>